<dbReference type="EC" id="3.1.1.61" evidence="1"/>
<dbReference type="EC" id="3.5.1.44" evidence="1"/>
<dbReference type="EMBL" id="AE010300">
    <property type="protein sequence ID" value="AAN49628.1"/>
    <property type="molecule type" value="Genomic_DNA"/>
</dbReference>
<dbReference type="RefSeq" id="NP_712610.1">
    <property type="nucleotide sequence ID" value="NC_004342.2"/>
</dbReference>
<dbReference type="RefSeq" id="WP_000616854.1">
    <property type="nucleotide sequence ID" value="NC_004342.2"/>
</dbReference>
<dbReference type="SMR" id="Q8F3H4"/>
<dbReference type="FunCoup" id="Q8F3H4">
    <property type="interactions" value="261"/>
</dbReference>
<dbReference type="STRING" id="189518.LA_2429"/>
<dbReference type="PaxDb" id="189518-LA_2429"/>
<dbReference type="EnsemblBacteria" id="AAN49628">
    <property type="protein sequence ID" value="AAN49628"/>
    <property type="gene ID" value="LA_2429"/>
</dbReference>
<dbReference type="KEGG" id="lil:LA_2429"/>
<dbReference type="PATRIC" id="fig|189518.3.peg.2409"/>
<dbReference type="HOGENOM" id="CLU_000445_51_0_12"/>
<dbReference type="InParanoid" id="Q8F3H4"/>
<dbReference type="OrthoDB" id="9793421at2"/>
<dbReference type="Proteomes" id="UP000001408">
    <property type="component" value="Chromosome I"/>
</dbReference>
<dbReference type="GO" id="GO:0005737">
    <property type="term" value="C:cytoplasm"/>
    <property type="evidence" value="ECO:0007669"/>
    <property type="project" value="UniProtKB-SubCell"/>
</dbReference>
<dbReference type="GO" id="GO:0000156">
    <property type="term" value="F:phosphorelay response regulator activity"/>
    <property type="evidence" value="ECO:0007669"/>
    <property type="project" value="InterPro"/>
</dbReference>
<dbReference type="GO" id="GO:0008984">
    <property type="term" value="F:protein-glutamate methylesterase activity"/>
    <property type="evidence" value="ECO:0007669"/>
    <property type="project" value="UniProtKB-UniRule"/>
</dbReference>
<dbReference type="GO" id="GO:0050568">
    <property type="term" value="F:protein-glutamine glutaminase activity"/>
    <property type="evidence" value="ECO:0007669"/>
    <property type="project" value="UniProtKB-UniRule"/>
</dbReference>
<dbReference type="GO" id="GO:0006935">
    <property type="term" value="P:chemotaxis"/>
    <property type="evidence" value="ECO:0007669"/>
    <property type="project" value="UniProtKB-UniRule"/>
</dbReference>
<dbReference type="CDD" id="cd16432">
    <property type="entry name" value="CheB_Rec"/>
    <property type="match status" value="1"/>
</dbReference>
<dbReference type="CDD" id="cd17541">
    <property type="entry name" value="REC_CheB-like"/>
    <property type="match status" value="1"/>
</dbReference>
<dbReference type="Gene3D" id="3.40.50.2300">
    <property type="match status" value="1"/>
</dbReference>
<dbReference type="Gene3D" id="3.40.50.180">
    <property type="entry name" value="Methylesterase CheB, C-terminal domain"/>
    <property type="match status" value="1"/>
</dbReference>
<dbReference type="HAMAP" id="MF_00099">
    <property type="entry name" value="CheB_chemtxs"/>
    <property type="match status" value="1"/>
</dbReference>
<dbReference type="InterPro" id="IPR008248">
    <property type="entry name" value="CheB-like"/>
</dbReference>
<dbReference type="InterPro" id="IPR035909">
    <property type="entry name" value="CheB_C"/>
</dbReference>
<dbReference type="InterPro" id="IPR011006">
    <property type="entry name" value="CheY-like_superfamily"/>
</dbReference>
<dbReference type="InterPro" id="IPR000673">
    <property type="entry name" value="Sig_transdc_resp-reg_Me-estase"/>
</dbReference>
<dbReference type="InterPro" id="IPR001789">
    <property type="entry name" value="Sig_transdc_resp-reg_receiver"/>
</dbReference>
<dbReference type="NCBIfam" id="NF001965">
    <property type="entry name" value="PRK00742.1"/>
    <property type="match status" value="1"/>
</dbReference>
<dbReference type="NCBIfam" id="NF009206">
    <property type="entry name" value="PRK12555.1"/>
    <property type="match status" value="1"/>
</dbReference>
<dbReference type="PANTHER" id="PTHR42872">
    <property type="entry name" value="PROTEIN-GLUTAMATE METHYLESTERASE/PROTEIN-GLUTAMINE GLUTAMINASE"/>
    <property type="match status" value="1"/>
</dbReference>
<dbReference type="PANTHER" id="PTHR42872:SF6">
    <property type="entry name" value="PROTEIN-GLUTAMATE METHYLESTERASE_PROTEIN-GLUTAMINE GLUTAMINASE"/>
    <property type="match status" value="1"/>
</dbReference>
<dbReference type="Pfam" id="PF01339">
    <property type="entry name" value="CheB_methylest"/>
    <property type="match status" value="1"/>
</dbReference>
<dbReference type="Pfam" id="PF00072">
    <property type="entry name" value="Response_reg"/>
    <property type="match status" value="1"/>
</dbReference>
<dbReference type="PIRSF" id="PIRSF000876">
    <property type="entry name" value="RR_chemtxs_CheB"/>
    <property type="match status" value="1"/>
</dbReference>
<dbReference type="SMART" id="SM00448">
    <property type="entry name" value="REC"/>
    <property type="match status" value="1"/>
</dbReference>
<dbReference type="SUPFAM" id="SSF52172">
    <property type="entry name" value="CheY-like"/>
    <property type="match status" value="1"/>
</dbReference>
<dbReference type="SUPFAM" id="SSF52738">
    <property type="entry name" value="Methylesterase CheB, C-terminal domain"/>
    <property type="match status" value="1"/>
</dbReference>
<dbReference type="PROSITE" id="PS50122">
    <property type="entry name" value="CHEB"/>
    <property type="match status" value="1"/>
</dbReference>
<dbReference type="PROSITE" id="PS50110">
    <property type="entry name" value="RESPONSE_REGULATORY"/>
    <property type="match status" value="1"/>
</dbReference>
<feature type="chain" id="PRO_0000158004" description="Protein-glutamate methylesterase/protein-glutamine glutaminase 3">
    <location>
        <begin position="1"/>
        <end position="347"/>
    </location>
</feature>
<feature type="domain" description="Response regulatory" evidence="1">
    <location>
        <begin position="3"/>
        <end position="120"/>
    </location>
</feature>
<feature type="domain" description="CheB-type methylesterase" evidence="1">
    <location>
        <begin position="159"/>
        <end position="347"/>
    </location>
</feature>
<feature type="active site" evidence="1">
    <location>
        <position position="171"/>
    </location>
</feature>
<feature type="active site" evidence="1">
    <location>
        <position position="197"/>
    </location>
</feature>
<feature type="active site" evidence="1">
    <location>
        <position position="293"/>
    </location>
</feature>
<feature type="modified residue" description="4-aspartylphosphate" evidence="1">
    <location>
        <position position="54"/>
    </location>
</feature>
<comment type="function">
    <text evidence="1">Involved in chemotaxis. Part of a chemotaxis signal transduction system that modulates chemotaxis in response to various stimuli. Catalyzes the demethylation of specific methylglutamate residues introduced into the chemoreceptors (methyl-accepting chemotaxis proteins or MCP) by CheR. Also mediates the irreversible deamidation of specific glutamine residues to glutamic acid.</text>
</comment>
<comment type="catalytic activity">
    <reaction evidence="1">
        <text>[protein]-L-glutamate 5-O-methyl ester + H2O = L-glutamyl-[protein] + methanol + H(+)</text>
        <dbReference type="Rhea" id="RHEA:23236"/>
        <dbReference type="Rhea" id="RHEA-COMP:10208"/>
        <dbReference type="Rhea" id="RHEA-COMP:10311"/>
        <dbReference type="ChEBI" id="CHEBI:15377"/>
        <dbReference type="ChEBI" id="CHEBI:15378"/>
        <dbReference type="ChEBI" id="CHEBI:17790"/>
        <dbReference type="ChEBI" id="CHEBI:29973"/>
        <dbReference type="ChEBI" id="CHEBI:82795"/>
        <dbReference type="EC" id="3.1.1.61"/>
    </reaction>
</comment>
<comment type="catalytic activity">
    <reaction evidence="1">
        <text>L-glutaminyl-[protein] + H2O = L-glutamyl-[protein] + NH4(+)</text>
        <dbReference type="Rhea" id="RHEA:16441"/>
        <dbReference type="Rhea" id="RHEA-COMP:10207"/>
        <dbReference type="Rhea" id="RHEA-COMP:10208"/>
        <dbReference type="ChEBI" id="CHEBI:15377"/>
        <dbReference type="ChEBI" id="CHEBI:28938"/>
        <dbReference type="ChEBI" id="CHEBI:29973"/>
        <dbReference type="ChEBI" id="CHEBI:30011"/>
        <dbReference type="EC" id="3.5.1.44"/>
    </reaction>
</comment>
<comment type="subcellular location">
    <subcellularLocation>
        <location evidence="1">Cytoplasm</location>
    </subcellularLocation>
</comment>
<comment type="domain">
    <text evidence="1">Contains a C-terminal catalytic domain, and an N-terminal region which modulates catalytic activity.</text>
</comment>
<comment type="PTM">
    <text evidence="1">Phosphorylated by CheA. Phosphorylation of the N-terminal regulatory domain activates the methylesterase activity.</text>
</comment>
<comment type="similarity">
    <text evidence="1">Belongs to the CheB family.</text>
</comment>
<reference key="1">
    <citation type="journal article" date="2003" name="Nature">
        <title>Unique physiological and pathogenic features of Leptospira interrogans revealed by whole-genome sequencing.</title>
        <authorList>
            <person name="Ren S.-X."/>
            <person name="Fu G."/>
            <person name="Jiang X.-G."/>
            <person name="Zeng R."/>
            <person name="Miao Y.-G."/>
            <person name="Xu H."/>
            <person name="Zhang Y.-X."/>
            <person name="Xiong H."/>
            <person name="Lu G."/>
            <person name="Lu L.-F."/>
            <person name="Jiang H.-Q."/>
            <person name="Jia J."/>
            <person name="Tu Y.-F."/>
            <person name="Jiang J.-X."/>
            <person name="Gu W.-Y."/>
            <person name="Zhang Y.-Q."/>
            <person name="Cai Z."/>
            <person name="Sheng H.-H."/>
            <person name="Yin H.-F."/>
            <person name="Zhang Y."/>
            <person name="Zhu G.-F."/>
            <person name="Wan M."/>
            <person name="Huang H.-L."/>
            <person name="Qian Z."/>
            <person name="Wang S.-Y."/>
            <person name="Ma W."/>
            <person name="Yao Z.-J."/>
            <person name="Shen Y."/>
            <person name="Qiang B.-Q."/>
            <person name="Xia Q.-C."/>
            <person name="Guo X.-K."/>
            <person name="Danchin A."/>
            <person name="Saint Girons I."/>
            <person name="Somerville R.L."/>
            <person name="Wen Y.-M."/>
            <person name="Shi M.-H."/>
            <person name="Chen Z."/>
            <person name="Xu J.-G."/>
            <person name="Zhao G.-P."/>
        </authorList>
    </citation>
    <scope>NUCLEOTIDE SEQUENCE [LARGE SCALE GENOMIC DNA]</scope>
    <source>
        <strain>56601</strain>
    </source>
</reference>
<gene>
    <name evidence="1" type="primary">cheB3</name>
    <name type="ordered locus">LA_2429</name>
</gene>
<proteinExistence type="inferred from homology"/>
<name>CHEB3_LEPIN</name>
<evidence type="ECO:0000255" key="1">
    <source>
        <dbReference type="HAMAP-Rule" id="MF_00099"/>
    </source>
</evidence>
<accession>Q8F3H4</accession>
<protein>
    <recommendedName>
        <fullName evidence="1">Protein-glutamate methylesterase/protein-glutamine glutaminase 3</fullName>
        <ecNumber evidence="1">3.1.1.61</ecNumber>
        <ecNumber evidence="1">3.5.1.44</ecNumber>
    </recommendedName>
</protein>
<organism>
    <name type="scientific">Leptospira interrogans serogroup Icterohaemorrhagiae serovar Lai (strain 56601)</name>
    <dbReference type="NCBI Taxonomy" id="189518"/>
    <lineage>
        <taxon>Bacteria</taxon>
        <taxon>Pseudomonadati</taxon>
        <taxon>Spirochaetota</taxon>
        <taxon>Spirochaetia</taxon>
        <taxon>Leptospirales</taxon>
        <taxon>Leptospiraceae</taxon>
        <taxon>Leptospira</taxon>
    </lineage>
</organism>
<sequence length="347" mass="37987">MIQVFIVDDSAVVRQVLTQILNKDPEIEIIGFASDPIFASEKLSSVWPDVFILDIEMPRMDGISFLKKIMSEKPTPVIICSSLAEKESETAVLAMKLGAVDIIEKPKVGLKNFLEESEILFIDSVRAASNARVKTHSFQNDDSKFLENHKQPKTDFSKIDTTDKLIAIGTSTGGTQALEFILTQLNIHCPGIVIVQHMPEKFTEAFANRLNQVCKIQVKEAKDGDRVQLGSAYIAPGNKHMEIYLSGAQFHIRVLDGPLVNRHRPSVDTLFHSVAKAAGKNAKGIIMTGMGNDGANGLLKMKQSGAHTIAQDEASCVVFGMPKEAILKGAVNTILPLSKIVGEVQYF</sequence>
<keyword id="KW-0145">Chemotaxis</keyword>
<keyword id="KW-0963">Cytoplasm</keyword>
<keyword id="KW-0378">Hydrolase</keyword>
<keyword id="KW-0597">Phosphoprotein</keyword>
<keyword id="KW-1185">Reference proteome</keyword>